<accession>Q2FH03</accession>
<comment type="function">
    <text evidence="1">Multidrug efflux pump that acts independently of NorA and is one of the factors that confers resistance against diverse quinolones and chemical compounds.</text>
</comment>
<comment type="subcellular location">
    <subcellularLocation>
        <location evidence="3">Cell membrane</location>
        <topology evidence="3">Multi-pass membrane protein</topology>
    </subcellularLocation>
</comment>
<comment type="similarity">
    <text evidence="3">Belongs to the major facilitator superfamily. TCR/Tet family.</text>
</comment>
<organism>
    <name type="scientific">Staphylococcus aureus (strain USA300)</name>
    <dbReference type="NCBI Taxonomy" id="367830"/>
    <lineage>
        <taxon>Bacteria</taxon>
        <taxon>Bacillati</taxon>
        <taxon>Bacillota</taxon>
        <taxon>Bacilli</taxon>
        <taxon>Bacillales</taxon>
        <taxon>Staphylococcaceae</taxon>
        <taxon>Staphylococcus</taxon>
    </lineage>
</organism>
<reference key="1">
    <citation type="journal article" date="2006" name="Lancet">
        <title>Complete genome sequence of USA300, an epidemic clone of community-acquired meticillin-resistant Staphylococcus aureus.</title>
        <authorList>
            <person name="Diep B.A."/>
            <person name="Gill S.R."/>
            <person name="Chang R.F."/>
            <person name="Phan T.H."/>
            <person name="Chen J.H."/>
            <person name="Davidson M.G."/>
            <person name="Lin F."/>
            <person name="Lin J."/>
            <person name="Carleton H.A."/>
            <person name="Mongodin E.F."/>
            <person name="Sensabaugh G.F."/>
            <person name="Perdreau-Remington F."/>
        </authorList>
    </citation>
    <scope>NUCLEOTIDE SEQUENCE [LARGE SCALE GENOMIC DNA]</scope>
    <source>
        <strain>USA300</strain>
    </source>
</reference>
<evidence type="ECO:0000250" key="1"/>
<evidence type="ECO:0000255" key="2"/>
<evidence type="ECO:0000305" key="3"/>
<gene>
    <name type="primary">norB</name>
    <name type="ordered locus">SAUSA300_1328</name>
</gene>
<protein>
    <recommendedName>
        <fullName>Quinolone resistance protein NorB</fullName>
    </recommendedName>
</protein>
<sequence>MEKPSREAFEGNNKLLIGIVLSVITFWLFAQSLVNVVPILEDSFNTDIGTVNIAVSITALFSGMFVVGAGGLADKYGRIKLTNIGIILNILGSLLIIISNIPLLLIIGRLIQGLSAACIMPATLSIIKSYYIGKDRQRALSYWSIGSWGGSGVCSFFGGAVATLLGWRWIFILSIIISLIALFLIKGTPETKSKSISLNKFDIKGLVLLVIMLLSLNILITKGSELGVTSLLFITLLAIAIGSFSLFIVLEKRATNPLIDFKLFKNKAYTGATASNFLLNGVAGTLIVANTFVQRGLGYSSLQAGSLSITYLVMVLIMIRVGEKLLQTLGCKKPMLIGTGVLIVGECLISLTFLPEIFYVICCIIGYLFFGLGLGIYATPSTDTAIANAPLEKVGVAAGIYKMASALGGAFGVALSGAVYAIVSNMTNIYTGAMIALWLNAGMGILSFVIILLLVPKQNDTQL</sequence>
<feature type="chain" id="PRO_0000361967" description="Quinolone resistance protein NorB">
    <location>
        <begin position="1"/>
        <end position="463"/>
    </location>
</feature>
<feature type="transmembrane region" description="Helical" evidence="2">
    <location>
        <begin position="17"/>
        <end position="37"/>
    </location>
</feature>
<feature type="transmembrane region" description="Helical" evidence="2">
    <location>
        <begin position="53"/>
        <end position="73"/>
    </location>
</feature>
<feature type="transmembrane region" description="Helical" evidence="2">
    <location>
        <begin position="86"/>
        <end position="106"/>
    </location>
</feature>
<feature type="transmembrane region" description="Helical" evidence="2">
    <location>
        <begin position="107"/>
        <end position="127"/>
    </location>
</feature>
<feature type="transmembrane region" description="Helical" evidence="2">
    <location>
        <begin position="142"/>
        <end position="162"/>
    </location>
</feature>
<feature type="transmembrane region" description="Helical" evidence="2">
    <location>
        <begin position="165"/>
        <end position="185"/>
    </location>
</feature>
<feature type="transmembrane region" description="Helical" evidence="2">
    <location>
        <begin position="201"/>
        <end position="221"/>
    </location>
</feature>
<feature type="transmembrane region" description="Helical" evidence="2">
    <location>
        <begin position="230"/>
        <end position="250"/>
    </location>
</feature>
<feature type="transmembrane region" description="Helical" evidence="2">
    <location>
        <begin position="273"/>
        <end position="293"/>
    </location>
</feature>
<feature type="transmembrane region" description="Helical" evidence="2">
    <location>
        <begin position="299"/>
        <end position="319"/>
    </location>
</feature>
<feature type="transmembrane region" description="Helical" evidence="2">
    <location>
        <begin position="334"/>
        <end position="354"/>
    </location>
</feature>
<feature type="transmembrane region" description="Helical" evidence="2">
    <location>
        <begin position="357"/>
        <end position="377"/>
    </location>
</feature>
<feature type="transmembrane region" description="Helical" evidence="2">
    <location>
        <begin position="403"/>
        <end position="423"/>
    </location>
</feature>
<feature type="transmembrane region" description="Helical" evidence="2">
    <location>
        <begin position="435"/>
        <end position="455"/>
    </location>
</feature>
<dbReference type="EMBL" id="CP000255">
    <property type="protein sequence ID" value="ABD21594.1"/>
    <property type="molecule type" value="Genomic_DNA"/>
</dbReference>
<dbReference type="RefSeq" id="WP_000414685.1">
    <property type="nucleotide sequence ID" value="NZ_CP027476.1"/>
</dbReference>
<dbReference type="SMR" id="Q2FH03"/>
<dbReference type="KEGG" id="saa:SAUSA300_1328"/>
<dbReference type="HOGENOM" id="CLU_000960_28_3_9"/>
<dbReference type="OMA" id="NLFHDPR"/>
<dbReference type="Proteomes" id="UP000001939">
    <property type="component" value="Chromosome"/>
</dbReference>
<dbReference type="GO" id="GO:0005886">
    <property type="term" value="C:plasma membrane"/>
    <property type="evidence" value="ECO:0007669"/>
    <property type="project" value="UniProtKB-SubCell"/>
</dbReference>
<dbReference type="GO" id="GO:0022857">
    <property type="term" value="F:transmembrane transporter activity"/>
    <property type="evidence" value="ECO:0007669"/>
    <property type="project" value="InterPro"/>
</dbReference>
<dbReference type="GO" id="GO:0046677">
    <property type="term" value="P:response to antibiotic"/>
    <property type="evidence" value="ECO:0007669"/>
    <property type="project" value="UniProtKB-KW"/>
</dbReference>
<dbReference type="CDD" id="cd17321">
    <property type="entry name" value="MFS_MMR_MDR_like"/>
    <property type="match status" value="1"/>
</dbReference>
<dbReference type="FunFam" id="1.20.1250.20:FF:000252">
    <property type="entry name" value="Quinolone resistance protein NorB"/>
    <property type="match status" value="1"/>
</dbReference>
<dbReference type="FunFam" id="1.20.1720.10:FF:000015">
    <property type="entry name" value="Quinolone resistance protein NorB"/>
    <property type="match status" value="1"/>
</dbReference>
<dbReference type="Gene3D" id="1.20.1250.20">
    <property type="entry name" value="MFS general substrate transporter like domains"/>
    <property type="match status" value="1"/>
</dbReference>
<dbReference type="Gene3D" id="1.20.1720.10">
    <property type="entry name" value="Multidrug resistance protein D"/>
    <property type="match status" value="1"/>
</dbReference>
<dbReference type="InterPro" id="IPR011701">
    <property type="entry name" value="MFS"/>
</dbReference>
<dbReference type="InterPro" id="IPR020846">
    <property type="entry name" value="MFS_dom"/>
</dbReference>
<dbReference type="InterPro" id="IPR036259">
    <property type="entry name" value="MFS_trans_sf"/>
</dbReference>
<dbReference type="PANTHER" id="PTHR42718">
    <property type="entry name" value="MAJOR FACILITATOR SUPERFAMILY MULTIDRUG TRANSPORTER MFSC"/>
    <property type="match status" value="1"/>
</dbReference>
<dbReference type="PANTHER" id="PTHR42718:SF9">
    <property type="entry name" value="MAJOR FACILITATOR SUPERFAMILY MULTIDRUG TRANSPORTER MFSC"/>
    <property type="match status" value="1"/>
</dbReference>
<dbReference type="Pfam" id="PF07690">
    <property type="entry name" value="MFS_1"/>
    <property type="match status" value="1"/>
</dbReference>
<dbReference type="SUPFAM" id="SSF103473">
    <property type="entry name" value="MFS general substrate transporter"/>
    <property type="match status" value="1"/>
</dbReference>
<dbReference type="PROSITE" id="PS50850">
    <property type="entry name" value="MFS"/>
    <property type="match status" value="1"/>
</dbReference>
<proteinExistence type="inferred from homology"/>
<name>NORB_STAA3</name>
<keyword id="KW-0046">Antibiotic resistance</keyword>
<keyword id="KW-1003">Cell membrane</keyword>
<keyword id="KW-0472">Membrane</keyword>
<keyword id="KW-0812">Transmembrane</keyword>
<keyword id="KW-1133">Transmembrane helix</keyword>
<keyword id="KW-0813">Transport</keyword>